<accession>Q28065</accession>
<accession>Q2KJ87</accession>
<dbReference type="EMBL" id="Z31693">
    <property type="protein sequence ID" value="CAA83498.1"/>
    <property type="molecule type" value="mRNA"/>
</dbReference>
<dbReference type="EMBL" id="BC105469">
    <property type="protein sequence ID" value="AAI05470.1"/>
    <property type="molecule type" value="mRNA"/>
</dbReference>
<dbReference type="PIR" id="I46001">
    <property type="entry name" value="I46001"/>
</dbReference>
<dbReference type="RefSeq" id="NP_776677.1">
    <property type="nucleotide sequence ID" value="NM_174252.3"/>
</dbReference>
<dbReference type="RefSeq" id="XP_005216703.1">
    <property type="nucleotide sequence ID" value="XM_005216646.5"/>
</dbReference>
<dbReference type="RefSeq" id="XP_005216704.1">
    <property type="nucleotide sequence ID" value="XM_005216647.3"/>
</dbReference>
<dbReference type="RefSeq" id="XP_010811307.1">
    <property type="nucleotide sequence ID" value="XM_010813005.2"/>
</dbReference>
<dbReference type="RefSeq" id="XP_010811308.1">
    <property type="nucleotide sequence ID" value="XM_010813006.2"/>
</dbReference>
<dbReference type="RefSeq" id="XP_010811309.1">
    <property type="nucleotide sequence ID" value="XM_010813007.2"/>
</dbReference>
<dbReference type="RefSeq" id="XP_010811310.1">
    <property type="nucleotide sequence ID" value="XM_010813008.4"/>
</dbReference>
<dbReference type="RefSeq" id="XP_010811311.1">
    <property type="nucleotide sequence ID" value="XM_010813009.4"/>
</dbReference>
<dbReference type="RefSeq" id="XP_010811312.1">
    <property type="nucleotide sequence ID" value="XM_010813010.4"/>
</dbReference>
<dbReference type="RefSeq" id="XP_010811313.1">
    <property type="nucleotide sequence ID" value="XM_010813011.2"/>
</dbReference>
<dbReference type="RefSeq" id="XP_010811314.1">
    <property type="nucleotide sequence ID" value="XM_010813012.4"/>
</dbReference>
<dbReference type="RefSeq" id="XP_024831789.1">
    <property type="nucleotide sequence ID" value="XM_024976021.2"/>
</dbReference>
<dbReference type="RefSeq" id="XP_059731218.1">
    <property type="nucleotide sequence ID" value="XM_059875235.1"/>
</dbReference>
<dbReference type="SMR" id="Q28065"/>
<dbReference type="FunCoup" id="Q28065">
    <property type="interactions" value="176"/>
</dbReference>
<dbReference type="STRING" id="9913.ENSBTAP00000073110"/>
<dbReference type="GlyCosmos" id="Q28065">
    <property type="glycosylation" value="4 sites, No reported glycans"/>
</dbReference>
<dbReference type="GlyGen" id="Q28065">
    <property type="glycosylation" value="4 sites"/>
</dbReference>
<dbReference type="PaxDb" id="9913-ENSBTAP00000047025"/>
<dbReference type="GeneID" id="281651"/>
<dbReference type="KEGG" id="bta:281651"/>
<dbReference type="CTD" id="722"/>
<dbReference type="VEuPathDB" id="HostDB:ENSBTAG00000009876"/>
<dbReference type="eggNOG" id="ENOG502SHRK">
    <property type="taxonomic scope" value="Eukaryota"/>
</dbReference>
<dbReference type="HOGENOM" id="CLU_020107_5_2_1"/>
<dbReference type="InParanoid" id="Q28065"/>
<dbReference type="OMA" id="VLRYRCH"/>
<dbReference type="OrthoDB" id="8961654at2759"/>
<dbReference type="TreeFam" id="TF334137"/>
<dbReference type="Proteomes" id="UP000009136">
    <property type="component" value="Chromosome 16"/>
</dbReference>
<dbReference type="Bgee" id="ENSBTAG00000009876">
    <property type="expression patterns" value="Expressed in liver and 68 other cell types or tissues"/>
</dbReference>
<dbReference type="GO" id="GO:0005615">
    <property type="term" value="C:extracellular space"/>
    <property type="evidence" value="ECO:0000318"/>
    <property type="project" value="GO_Central"/>
</dbReference>
<dbReference type="GO" id="GO:0005886">
    <property type="term" value="C:plasma membrane"/>
    <property type="evidence" value="ECO:0000318"/>
    <property type="project" value="GO_Central"/>
</dbReference>
<dbReference type="GO" id="GO:0006958">
    <property type="term" value="P:complement activation, classical pathway"/>
    <property type="evidence" value="ECO:0007669"/>
    <property type="project" value="UniProtKB-KW"/>
</dbReference>
<dbReference type="GO" id="GO:0045087">
    <property type="term" value="P:innate immune response"/>
    <property type="evidence" value="ECO:0007669"/>
    <property type="project" value="UniProtKB-KW"/>
</dbReference>
<dbReference type="GO" id="GO:0045959">
    <property type="term" value="P:negative regulation of complement activation, classical pathway"/>
    <property type="evidence" value="ECO:0000318"/>
    <property type="project" value="GO_Central"/>
</dbReference>
<dbReference type="GO" id="GO:0002456">
    <property type="term" value="P:T cell mediated immunity"/>
    <property type="evidence" value="ECO:0000318"/>
    <property type="project" value="GO_Central"/>
</dbReference>
<dbReference type="CDD" id="cd00033">
    <property type="entry name" value="CCP"/>
    <property type="match status" value="7"/>
</dbReference>
<dbReference type="FunFam" id="2.10.70.10:FF:000055">
    <property type="entry name" value="Complement decay-accelerating factor, GPI-anchored"/>
    <property type="match status" value="1"/>
</dbReference>
<dbReference type="FunFam" id="2.10.70.10:FF:000014">
    <property type="entry name" value="Membrane cofactor protein"/>
    <property type="match status" value="2"/>
</dbReference>
<dbReference type="Gene3D" id="1.20.5.3730">
    <property type="match status" value="1"/>
</dbReference>
<dbReference type="Gene3D" id="2.10.70.10">
    <property type="entry name" value="Complement Module, domain 1"/>
    <property type="match status" value="8"/>
</dbReference>
<dbReference type="InterPro" id="IPR040514">
    <property type="entry name" value="C4bp_oligo"/>
</dbReference>
<dbReference type="InterPro" id="IPR051277">
    <property type="entry name" value="SEZ6_CSMD_C4BPB_Regulators"/>
</dbReference>
<dbReference type="InterPro" id="IPR035976">
    <property type="entry name" value="Sushi/SCR/CCP_sf"/>
</dbReference>
<dbReference type="InterPro" id="IPR000436">
    <property type="entry name" value="Sushi_SCR_CCP_dom"/>
</dbReference>
<dbReference type="PANTHER" id="PTHR45656:SF3">
    <property type="entry name" value="CUB AND SUSHI DOMAIN-CONTAINING PROTEIN 1"/>
    <property type="match status" value="1"/>
</dbReference>
<dbReference type="PANTHER" id="PTHR45656">
    <property type="entry name" value="PROTEIN CBR-CLEC-78"/>
    <property type="match status" value="1"/>
</dbReference>
<dbReference type="Pfam" id="PF18453">
    <property type="entry name" value="C4bp_oligo"/>
    <property type="match status" value="1"/>
</dbReference>
<dbReference type="Pfam" id="PF00084">
    <property type="entry name" value="Sushi"/>
    <property type="match status" value="8"/>
</dbReference>
<dbReference type="SMART" id="SM00032">
    <property type="entry name" value="CCP"/>
    <property type="match status" value="8"/>
</dbReference>
<dbReference type="SUPFAM" id="SSF57535">
    <property type="entry name" value="Complement control module/SCR domain"/>
    <property type="match status" value="8"/>
</dbReference>
<dbReference type="PROSITE" id="PS50923">
    <property type="entry name" value="SUSHI"/>
    <property type="match status" value="8"/>
</dbReference>
<feature type="signal peptide" evidence="1">
    <location>
        <begin position="1"/>
        <end position="48"/>
    </location>
</feature>
<feature type="chain" id="PRO_0000005887" description="C4b-binding protein alpha chain">
    <location>
        <begin position="49"/>
        <end position="610"/>
    </location>
</feature>
<feature type="domain" description="Sushi 1" evidence="3">
    <location>
        <begin position="49"/>
        <end position="109"/>
    </location>
</feature>
<feature type="domain" description="Sushi 2" evidence="3">
    <location>
        <begin position="110"/>
        <end position="171"/>
    </location>
</feature>
<feature type="domain" description="Sushi 3" evidence="3">
    <location>
        <begin position="172"/>
        <end position="236"/>
    </location>
</feature>
<feature type="domain" description="Sushi 4" evidence="3">
    <location>
        <begin position="237"/>
        <end position="296"/>
    </location>
</feature>
<feature type="domain" description="Sushi 5" evidence="3">
    <location>
        <begin position="297"/>
        <end position="364"/>
    </location>
</feature>
<feature type="domain" description="Sushi 6" evidence="3">
    <location>
        <begin position="365"/>
        <end position="427"/>
    </location>
</feature>
<feature type="domain" description="Sushi 7" evidence="3">
    <location>
        <begin position="428"/>
        <end position="485"/>
    </location>
</feature>
<feature type="domain" description="Sushi 8" evidence="3">
    <location>
        <begin position="486"/>
        <end position="543"/>
    </location>
</feature>
<feature type="glycosylation site" description="N-linked (GlcNAc...) asparagine" evidence="2">
    <location>
        <position position="66"/>
    </location>
</feature>
<feature type="glycosylation site" description="N-linked (GlcNAc...) asparagine" evidence="2">
    <location>
        <position position="221"/>
    </location>
</feature>
<feature type="glycosylation site" description="N-linked (GlcNAc...) asparagine" evidence="2">
    <location>
        <position position="525"/>
    </location>
</feature>
<feature type="glycosylation site" description="N-linked (GlcNAc...) asparagine" evidence="2">
    <location>
        <position position="602"/>
    </location>
</feature>
<feature type="disulfide bond" evidence="3">
    <location>
        <begin position="50"/>
        <end position="95"/>
    </location>
</feature>
<feature type="disulfide bond" evidence="3">
    <location>
        <begin position="80"/>
        <end position="107"/>
    </location>
</feature>
<feature type="disulfide bond" evidence="3">
    <location>
        <begin position="112"/>
        <end position="153"/>
    </location>
</feature>
<feature type="disulfide bond" evidence="3">
    <location>
        <begin position="139"/>
        <end position="169"/>
    </location>
</feature>
<feature type="disulfide bond" evidence="3">
    <location>
        <begin position="174"/>
        <end position="217"/>
    </location>
</feature>
<feature type="disulfide bond" evidence="3">
    <location>
        <begin position="203"/>
        <end position="234"/>
    </location>
</feature>
<feature type="disulfide bond" evidence="3">
    <location>
        <begin position="239"/>
        <end position="281"/>
    </location>
</feature>
<feature type="disulfide bond" evidence="3">
    <location>
        <begin position="267"/>
        <end position="294"/>
    </location>
</feature>
<feature type="disulfide bond" evidence="3">
    <location>
        <begin position="299"/>
        <end position="350"/>
    </location>
</feature>
<feature type="disulfide bond" evidence="3">
    <location>
        <begin position="334"/>
        <end position="362"/>
    </location>
</feature>
<feature type="disulfide bond" evidence="3">
    <location>
        <begin position="367"/>
        <end position="412"/>
    </location>
</feature>
<feature type="disulfide bond" evidence="3">
    <location>
        <begin position="402"/>
        <end position="425"/>
    </location>
</feature>
<feature type="disulfide bond" evidence="3">
    <location>
        <begin position="429"/>
        <end position="471"/>
    </location>
</feature>
<feature type="disulfide bond" evidence="3">
    <location>
        <begin position="457"/>
        <end position="483"/>
    </location>
</feature>
<feature type="disulfide bond" evidence="3">
    <location>
        <begin position="487"/>
        <end position="528"/>
    </location>
</feature>
<feature type="disulfide bond" evidence="3">
    <location>
        <begin position="514"/>
        <end position="541"/>
    </location>
</feature>
<feature type="disulfide bond" description="Interchain (with beta chain)" evidence="3">
    <location>
        <position position="549"/>
    </location>
</feature>
<feature type="disulfide bond" description="Interchain (with beta chain)" evidence="3">
    <location>
        <position position="561"/>
    </location>
</feature>
<reference key="1">
    <citation type="journal article" date="1994" name="J. Immunol.">
        <title>Bovine C4b binding protein. Molecular cloning of the alpha- and beta-chains provides structural background for lack of complex formation with protein S.</title>
        <authorList>
            <person name="Hillarp A."/>
            <person name="Thern A."/>
            <person name="Dahlbaech B."/>
        </authorList>
    </citation>
    <scope>NUCLEOTIDE SEQUENCE [MRNA]</scope>
    <source>
        <tissue>Liver</tissue>
    </source>
</reference>
<reference key="2">
    <citation type="submission" date="2005-09" db="EMBL/GenBank/DDBJ databases">
        <authorList>
            <consortium name="NIH - Mammalian Gene Collection (MGC) project"/>
        </authorList>
    </citation>
    <scope>NUCLEOTIDE SEQUENCE [LARGE SCALE MRNA]</scope>
    <source>
        <strain>Hereford</strain>
        <tissue>Fetal liver</tissue>
    </source>
</reference>
<evidence type="ECO:0000250" key="1"/>
<evidence type="ECO:0000255" key="2"/>
<evidence type="ECO:0000255" key="3">
    <source>
        <dbReference type="PROSITE-ProRule" id="PRU00302"/>
    </source>
</evidence>
<name>C4BPA_BOVIN</name>
<keyword id="KW-0180">Complement pathway</keyword>
<keyword id="KW-1015">Disulfide bond</keyword>
<keyword id="KW-0325">Glycoprotein</keyword>
<keyword id="KW-0391">Immunity</keyword>
<keyword id="KW-0399">Innate immunity</keyword>
<keyword id="KW-1185">Reference proteome</keyword>
<keyword id="KW-0677">Repeat</keyword>
<keyword id="KW-0964">Secreted</keyword>
<keyword id="KW-0732">Signal</keyword>
<keyword id="KW-0768">Sushi</keyword>
<gene>
    <name type="primary">C4BPA</name>
</gene>
<protein>
    <recommendedName>
        <fullName>C4b-binding protein alpha chain</fullName>
        <shortName>C4bp</shortName>
    </recommendedName>
</protein>
<comment type="function">
    <text>Controls the classical pathway of complement activation. It binds as a cofactor to C3b/C4b inactivator (C3bINA), which then hydrolyzes the complement fragment C4b. It also accelerates the degradation of the C4bC2a complex (C3 convertase) by dissociating the complement fragment C2a. Alpha chain binds C4b. It also interacts with serum amyloid P component.</text>
</comment>
<comment type="subunit">
    <text evidence="1">Disulfide-linked complex of alpha and beta chains.</text>
</comment>
<comment type="subcellular location">
    <subcellularLocation>
        <location>Secreted</location>
    </subcellularLocation>
</comment>
<proteinExistence type="evidence at transcript level"/>
<organism>
    <name type="scientific">Bos taurus</name>
    <name type="common">Bovine</name>
    <dbReference type="NCBI Taxonomy" id="9913"/>
    <lineage>
        <taxon>Eukaryota</taxon>
        <taxon>Metazoa</taxon>
        <taxon>Chordata</taxon>
        <taxon>Craniata</taxon>
        <taxon>Vertebrata</taxon>
        <taxon>Euteleostomi</taxon>
        <taxon>Mammalia</taxon>
        <taxon>Eutheria</taxon>
        <taxon>Laurasiatheria</taxon>
        <taxon>Artiodactyla</taxon>
        <taxon>Ruminantia</taxon>
        <taxon>Pecora</taxon>
        <taxon>Bovidae</taxon>
        <taxon>Bovinae</taxon>
        <taxon>Bos</taxon>
    </lineage>
</organism>
<sequence length="610" mass="68886">MKHQRVPVMILHSKGTMASWPFSRLWSISDPILFQVTLVATLLATVLGSCGIPPYLDFAFPINELNETRFETGTTLRYTCRPGYRISSRKNFLICDGTDNWKYKEFCVKKRCENPGELLNGQVIVKTDYSFGSEIEFSCSEGYVLIGSANSYCQLQDKGVVWSDPLPQCIIAKCEPPPTISNGRHNGGDEDFYTYGSSVTYSCDRDFSMLGKASISCRVENKTIGVWSPSPPSCKKVICVQPVVKDGKITSGFGPIYTYQQSIVYACNKGFRLEGDSLIHCEADNSWNPPPPTCELNGCLGLPHIPHALWERYDHQTQTEQQVYDIGFVLSYKCHFGYKPETDGPTTVTCQSNLEWSPYIECKEVCCPEPNLNNYGSITLHRRPSTSTHCTYISGDKISYECHSKYMFDALCTKHGTWSPRTPECRPDCKSPPVIAHGQHKVVSKFFTFDHQAVYECDKGYILVGAKELSCTSSGWSPAVPQCKALCLKPEIEYGRLSVEKVRYVEPEIITIQCESGYSVVGSENITCSEDRTWYPEVPKCEWEYPEGCEQVVTGRKLLQCLSRPEEVKLALEVYKLSLEIEILQTNKLKKEAFLLREREKNVTCDFNPE</sequence>